<protein>
    <recommendedName>
        <fullName evidence="4 7">Oleosin</fullName>
    </recommendedName>
</protein>
<reference key="1">
    <citation type="journal article" date="2017" name="Plant Physiol. Biochem.">
        <title>Identification of caleosin and oleosin in oil bodies of pine pollen.</title>
        <authorList>
            <person name="Pasaribu B."/>
            <person name="Chen C.S."/>
            <person name="Liao Y.K."/>
            <person name="Jiang P.L."/>
            <person name="Tzen J.T.C."/>
        </authorList>
    </citation>
    <scope>NUCLEOTIDE SEQUENCE [MRNA]</scope>
    <scope>SUBCELLULAR LOCATION</scope>
    <scope>TISSUE SPECIFICITY</scope>
    <source>
        <tissue evidence="4">Pollen</tissue>
    </source>
</reference>
<accession>A0A1I9R3Y6</accession>
<keyword id="KW-0007">Acetylation</keyword>
<keyword id="KW-0551">Lipid droplet</keyword>
<keyword id="KW-0472">Membrane</keyword>
<keyword id="KW-0812">Transmembrane</keyword>
<keyword id="KW-1133">Transmembrane helix</keyword>
<name>OLE_PINEL</name>
<comment type="subcellular location">
    <subcellularLocation>
        <location evidence="3">Lipid droplet</location>
    </subcellularLocation>
    <subcellularLocation>
        <location evidence="2">Membrane</location>
        <topology evidence="2">Multi-pass membrane protein</topology>
    </subcellularLocation>
    <text evidence="5">Surface of oil bodies. Oleosins exist at a monolayer lipid/water interface.</text>
</comment>
<comment type="tissue specificity">
    <text evidence="3">Expressed in pollen (at protein level).</text>
</comment>
<comment type="domain">
    <text evidence="5">The proline-knot motif may be involved in targeting to lipid bodies.</text>
</comment>
<comment type="similarity">
    <text evidence="5">Belongs to the oleosin family.</text>
</comment>
<dbReference type="EMBL" id="KX688796">
    <property type="protein sequence ID" value="AOZ15521.1"/>
    <property type="molecule type" value="mRNA"/>
</dbReference>
<dbReference type="SMR" id="A0A1I9R3Y6"/>
<dbReference type="GO" id="GO:0016020">
    <property type="term" value="C:membrane"/>
    <property type="evidence" value="ECO:0007669"/>
    <property type="project" value="UniProtKB-SubCell"/>
</dbReference>
<dbReference type="GO" id="GO:0012511">
    <property type="term" value="C:monolayer-surrounded lipid storage body"/>
    <property type="evidence" value="ECO:0000314"/>
    <property type="project" value="UniProtKB"/>
</dbReference>
<dbReference type="GO" id="GO:0019915">
    <property type="term" value="P:lipid storage"/>
    <property type="evidence" value="ECO:0007669"/>
    <property type="project" value="TreeGrafter"/>
</dbReference>
<dbReference type="InterPro" id="IPR000136">
    <property type="entry name" value="Oleosin"/>
</dbReference>
<dbReference type="PANTHER" id="PTHR33203:SF4">
    <property type="entry name" value="F27J15.22"/>
    <property type="match status" value="1"/>
</dbReference>
<dbReference type="PANTHER" id="PTHR33203">
    <property type="entry name" value="OLEOSIN"/>
    <property type="match status" value="1"/>
</dbReference>
<dbReference type="Pfam" id="PF01277">
    <property type="entry name" value="Oleosin"/>
    <property type="match status" value="1"/>
</dbReference>
<organism evidence="7">
    <name type="scientific">Pinus elliottii</name>
    <name type="common">Slash pine</name>
    <dbReference type="NCBI Taxonomy" id="42064"/>
    <lineage>
        <taxon>Eukaryota</taxon>
        <taxon>Viridiplantae</taxon>
        <taxon>Streptophyta</taxon>
        <taxon>Embryophyta</taxon>
        <taxon>Tracheophyta</taxon>
        <taxon>Spermatophyta</taxon>
        <taxon>Pinopsida</taxon>
        <taxon>Pinidae</taxon>
        <taxon>Conifers I</taxon>
        <taxon>Pinales</taxon>
        <taxon>Pinaceae</taxon>
        <taxon>Pinus</taxon>
        <taxon>Pinus subgen. Pinus</taxon>
    </lineage>
</organism>
<evidence type="ECO:0000250" key="1">
    <source>
        <dbReference type="UniProtKB" id="C3S7F0"/>
    </source>
</evidence>
<evidence type="ECO:0000255" key="2"/>
<evidence type="ECO:0000269" key="3">
    <source>
    </source>
</evidence>
<evidence type="ECO:0000303" key="4">
    <source>
    </source>
</evidence>
<evidence type="ECO:0000305" key="5"/>
<evidence type="ECO:0000305" key="6">
    <source>
    </source>
</evidence>
<evidence type="ECO:0000312" key="7">
    <source>
        <dbReference type="EMBL" id="AOZ15521.1"/>
    </source>
</evidence>
<sequence>MADQYHGVMQKIHDHTPNPTQILGFITLFVSGAILLLLTGLTLTGTVIGLVVLTPVLIFFSPILIPVATVLFVAVAGFLSAGGFGLAALSAISWLYNYIKGRHPPGADQIDYARMRIADTASHVKDYAREYGGYLQSKIQDAAPGA</sequence>
<proteinExistence type="evidence at protein level"/>
<feature type="initiator methionine" description="Removed" evidence="1">
    <location>
        <position position="1"/>
    </location>
</feature>
<feature type="chain" id="PRO_0000449968" description="Oleosin">
    <location>
        <begin position="2"/>
        <end position="146"/>
    </location>
</feature>
<feature type="transmembrane region" description="Helical" evidence="2">
    <location>
        <begin position="22"/>
        <end position="42"/>
    </location>
</feature>
<feature type="transmembrane region" description="Helical" evidence="2">
    <location>
        <begin position="56"/>
        <end position="76"/>
    </location>
</feature>
<feature type="transmembrane region" description="Helical" evidence="2">
    <location>
        <begin position="77"/>
        <end position="97"/>
    </location>
</feature>
<feature type="short sequence motif" description="Proline-knot" evidence="6">
    <location>
        <begin position="55"/>
        <end position="66"/>
    </location>
</feature>
<feature type="modified residue" description="N-acetylalanine" evidence="1">
    <location>
        <position position="2"/>
    </location>
</feature>